<organism>
    <name type="scientific">Dictyostelium discoideum</name>
    <name type="common">Social amoeba</name>
    <dbReference type="NCBI Taxonomy" id="44689"/>
    <lineage>
        <taxon>Eukaryota</taxon>
        <taxon>Amoebozoa</taxon>
        <taxon>Evosea</taxon>
        <taxon>Eumycetozoa</taxon>
        <taxon>Dictyostelia</taxon>
        <taxon>Dictyosteliales</taxon>
        <taxon>Dictyosteliaceae</taxon>
        <taxon>Dictyostelium</taxon>
    </lineage>
</organism>
<name>MCM6_DICDI</name>
<accession>Q86B14</accession>
<accession>Q1ZXM5</accession>
<proteinExistence type="inferred from homology"/>
<feature type="chain" id="PRO_0000328208" description="DNA replication licensing factor mcm6">
    <location>
        <begin position="1"/>
        <end position="867"/>
    </location>
</feature>
<feature type="domain" description="MCM" evidence="4">
    <location>
        <begin position="420"/>
        <end position="626"/>
    </location>
</feature>
<feature type="region of interest" description="Disordered" evidence="5">
    <location>
        <begin position="51"/>
        <end position="76"/>
    </location>
</feature>
<feature type="short sequence motif" description="Arginine finger">
    <location>
        <begin position="602"/>
        <end position="605"/>
    </location>
</feature>
<feature type="compositionally biased region" description="Acidic residues" evidence="5">
    <location>
        <begin position="61"/>
        <end position="75"/>
    </location>
</feature>
<feature type="binding site" evidence="3">
    <location>
        <position position="473"/>
    </location>
    <ligand>
        <name>ATP</name>
        <dbReference type="ChEBI" id="CHEBI:30616"/>
        <note>ligand shared with MCM4</note>
    </ligand>
</feature>
<feature type="binding site" evidence="3">
    <location>
        <position position="474"/>
    </location>
    <ligand>
        <name>ATP</name>
        <dbReference type="ChEBI" id="CHEBI:30616"/>
        <note>ligand shared with MCM4</note>
    </ligand>
</feature>
<feature type="binding site" evidence="3">
    <location>
        <position position="476"/>
    </location>
    <ligand>
        <name>ATP</name>
        <dbReference type="ChEBI" id="CHEBI:30616"/>
        <note>ligand shared with MCM4</note>
    </ligand>
</feature>
<feature type="binding site" evidence="3">
    <location>
        <position position="477"/>
    </location>
    <ligand>
        <name>ATP</name>
        <dbReference type="ChEBI" id="CHEBI:30616"/>
        <note>ligand shared with MCM4</note>
    </ligand>
</feature>
<feature type="binding site" evidence="3">
    <location>
        <position position="578"/>
    </location>
    <ligand>
        <name>ATP</name>
        <dbReference type="ChEBI" id="CHEBI:30616"/>
        <note>ligand shared with MCM4</note>
    </ligand>
</feature>
<feature type="binding site" evidence="3">
    <location>
        <position position="693"/>
    </location>
    <ligand>
        <name>ADP</name>
        <dbReference type="ChEBI" id="CHEBI:456216"/>
        <note>ligand shared with MCM2</note>
    </ligand>
</feature>
<feature type="binding site" evidence="3">
    <location>
        <position position="696"/>
    </location>
    <ligand>
        <name>ADP</name>
        <dbReference type="ChEBI" id="CHEBI:456216"/>
        <note>ligand shared with MCM2</note>
    </ligand>
</feature>
<gene>
    <name type="primary">mcm6</name>
    <name type="ORF">DDB_G0272760</name>
</gene>
<dbReference type="EC" id="3.6.4.12" evidence="2"/>
<dbReference type="EMBL" id="AAFI02000008">
    <property type="protein sequence ID" value="EAS66960.1"/>
    <property type="molecule type" value="Genomic_DNA"/>
</dbReference>
<dbReference type="RefSeq" id="XP_001134626.1">
    <property type="nucleotide sequence ID" value="XM_001134626.1"/>
</dbReference>
<dbReference type="SMR" id="Q86B14"/>
<dbReference type="FunCoup" id="Q86B14">
    <property type="interactions" value="786"/>
</dbReference>
<dbReference type="STRING" id="44689.Q86B14"/>
<dbReference type="PaxDb" id="44689-DDB0232357"/>
<dbReference type="EnsemblProtists" id="EAS66960">
    <property type="protein sequence ID" value="EAS66960"/>
    <property type="gene ID" value="DDB_G0272760"/>
</dbReference>
<dbReference type="GeneID" id="8618624"/>
<dbReference type="KEGG" id="ddi:DDB_G0272760"/>
<dbReference type="dictyBase" id="DDB_G0272760">
    <property type="gene designation" value="mcm6"/>
</dbReference>
<dbReference type="VEuPathDB" id="AmoebaDB:DDB_G0272760"/>
<dbReference type="eggNOG" id="KOG0480">
    <property type="taxonomic scope" value="Eukaryota"/>
</dbReference>
<dbReference type="HOGENOM" id="CLU_000995_3_2_1"/>
<dbReference type="InParanoid" id="Q86B14"/>
<dbReference type="OMA" id="RHQQTDK"/>
<dbReference type="PhylomeDB" id="Q86B14"/>
<dbReference type="Reactome" id="R-DDI-68867">
    <property type="pathway name" value="Assembly of the pre-replicative complex"/>
</dbReference>
<dbReference type="Reactome" id="R-DDI-68962">
    <property type="pathway name" value="Activation of the pre-replicative complex"/>
</dbReference>
<dbReference type="Reactome" id="R-DDI-69052">
    <property type="pathway name" value="Switching of origins to a post-replicative state"/>
</dbReference>
<dbReference type="PRO" id="PR:Q86B14"/>
<dbReference type="Proteomes" id="UP000002195">
    <property type="component" value="Chromosome 2"/>
</dbReference>
<dbReference type="GO" id="GO:0042555">
    <property type="term" value="C:MCM complex"/>
    <property type="evidence" value="ECO:0000250"/>
    <property type="project" value="UniProtKB"/>
</dbReference>
<dbReference type="GO" id="GO:0005634">
    <property type="term" value="C:nucleus"/>
    <property type="evidence" value="ECO:0000318"/>
    <property type="project" value="GO_Central"/>
</dbReference>
<dbReference type="GO" id="GO:0005524">
    <property type="term" value="F:ATP binding"/>
    <property type="evidence" value="ECO:0007669"/>
    <property type="project" value="UniProtKB-KW"/>
</dbReference>
<dbReference type="GO" id="GO:0016887">
    <property type="term" value="F:ATP hydrolysis activity"/>
    <property type="evidence" value="ECO:0007669"/>
    <property type="project" value="RHEA"/>
</dbReference>
<dbReference type="GO" id="GO:0003678">
    <property type="term" value="F:DNA helicase activity"/>
    <property type="evidence" value="ECO:0007669"/>
    <property type="project" value="InterPro"/>
</dbReference>
<dbReference type="GO" id="GO:0003697">
    <property type="term" value="F:single-stranded DNA binding"/>
    <property type="evidence" value="ECO:0000318"/>
    <property type="project" value="GO_Central"/>
</dbReference>
<dbReference type="GO" id="GO:0006260">
    <property type="term" value="P:DNA replication"/>
    <property type="evidence" value="ECO:0000318"/>
    <property type="project" value="GO_Central"/>
</dbReference>
<dbReference type="GO" id="GO:0006270">
    <property type="term" value="P:DNA replication initiation"/>
    <property type="evidence" value="ECO:0007669"/>
    <property type="project" value="InterPro"/>
</dbReference>
<dbReference type="GO" id="GO:0000727">
    <property type="term" value="P:double-strand break repair via break-induced replication"/>
    <property type="evidence" value="ECO:0000318"/>
    <property type="project" value="GO_Central"/>
</dbReference>
<dbReference type="GO" id="GO:1902969">
    <property type="term" value="P:mitotic DNA replication"/>
    <property type="evidence" value="ECO:0000318"/>
    <property type="project" value="GO_Central"/>
</dbReference>
<dbReference type="CDD" id="cd17757">
    <property type="entry name" value="MCM6"/>
    <property type="match status" value="1"/>
</dbReference>
<dbReference type="FunFam" id="2.20.28.10:FF:000003">
    <property type="entry name" value="DNA helicase"/>
    <property type="match status" value="1"/>
</dbReference>
<dbReference type="FunFam" id="3.40.50.300:FF:000115">
    <property type="entry name" value="DNA helicase"/>
    <property type="match status" value="1"/>
</dbReference>
<dbReference type="FunFam" id="3.30.1640.10:FF:000062">
    <property type="entry name" value="DNA replication licensing factor mcm6"/>
    <property type="match status" value="1"/>
</dbReference>
<dbReference type="Gene3D" id="1.20.58.870">
    <property type="match status" value="1"/>
</dbReference>
<dbReference type="Gene3D" id="2.20.28.10">
    <property type="match status" value="1"/>
</dbReference>
<dbReference type="Gene3D" id="3.30.1640.10">
    <property type="entry name" value="mini-chromosome maintenance (MCM) complex, chain A, domain 1"/>
    <property type="match status" value="1"/>
</dbReference>
<dbReference type="Gene3D" id="2.40.50.140">
    <property type="entry name" value="Nucleic acid-binding proteins"/>
    <property type="match status" value="1"/>
</dbReference>
<dbReference type="Gene3D" id="3.40.50.300">
    <property type="entry name" value="P-loop containing nucleotide triphosphate hydrolases"/>
    <property type="match status" value="1"/>
</dbReference>
<dbReference type="InterPro" id="IPR031327">
    <property type="entry name" value="MCM"/>
</dbReference>
<dbReference type="InterPro" id="IPR008049">
    <property type="entry name" value="MCM6"/>
</dbReference>
<dbReference type="InterPro" id="IPR041024">
    <property type="entry name" value="Mcm6_C"/>
</dbReference>
<dbReference type="InterPro" id="IPR018525">
    <property type="entry name" value="MCM_CS"/>
</dbReference>
<dbReference type="InterPro" id="IPR001208">
    <property type="entry name" value="MCM_dom"/>
</dbReference>
<dbReference type="InterPro" id="IPR041562">
    <property type="entry name" value="MCM_lid"/>
</dbReference>
<dbReference type="InterPro" id="IPR027925">
    <property type="entry name" value="MCM_N"/>
</dbReference>
<dbReference type="InterPro" id="IPR033762">
    <property type="entry name" value="MCM_OB"/>
</dbReference>
<dbReference type="InterPro" id="IPR012340">
    <property type="entry name" value="NA-bd_OB-fold"/>
</dbReference>
<dbReference type="InterPro" id="IPR027417">
    <property type="entry name" value="P-loop_NTPase"/>
</dbReference>
<dbReference type="PANTHER" id="PTHR11630">
    <property type="entry name" value="DNA REPLICATION LICENSING FACTOR MCM FAMILY MEMBER"/>
    <property type="match status" value="1"/>
</dbReference>
<dbReference type="PANTHER" id="PTHR11630:SF43">
    <property type="entry name" value="DNA REPLICATION LICENSING FACTOR MCM6"/>
    <property type="match status" value="1"/>
</dbReference>
<dbReference type="Pfam" id="PF00493">
    <property type="entry name" value="MCM"/>
    <property type="match status" value="1"/>
</dbReference>
<dbReference type="Pfam" id="PF18263">
    <property type="entry name" value="MCM6_C"/>
    <property type="match status" value="1"/>
</dbReference>
<dbReference type="Pfam" id="PF17855">
    <property type="entry name" value="MCM_lid"/>
    <property type="match status" value="1"/>
</dbReference>
<dbReference type="Pfam" id="PF14551">
    <property type="entry name" value="MCM_N"/>
    <property type="match status" value="1"/>
</dbReference>
<dbReference type="Pfam" id="PF17207">
    <property type="entry name" value="MCM_OB"/>
    <property type="match status" value="1"/>
</dbReference>
<dbReference type="PRINTS" id="PR01657">
    <property type="entry name" value="MCMFAMILY"/>
</dbReference>
<dbReference type="PRINTS" id="PR01662">
    <property type="entry name" value="MCMPROTEIN6"/>
</dbReference>
<dbReference type="SMART" id="SM00350">
    <property type="entry name" value="MCM"/>
    <property type="match status" value="1"/>
</dbReference>
<dbReference type="SUPFAM" id="SSF50249">
    <property type="entry name" value="Nucleic acid-binding proteins"/>
    <property type="match status" value="1"/>
</dbReference>
<dbReference type="SUPFAM" id="SSF52540">
    <property type="entry name" value="P-loop containing nucleoside triphosphate hydrolases"/>
    <property type="match status" value="1"/>
</dbReference>
<dbReference type="PROSITE" id="PS00847">
    <property type="entry name" value="MCM_1"/>
    <property type="match status" value="1"/>
</dbReference>
<dbReference type="PROSITE" id="PS50051">
    <property type="entry name" value="MCM_2"/>
    <property type="match status" value="1"/>
</dbReference>
<keyword id="KW-0067">ATP-binding</keyword>
<keyword id="KW-0131">Cell cycle</keyword>
<keyword id="KW-0235">DNA replication</keyword>
<keyword id="KW-0238">DNA-binding</keyword>
<keyword id="KW-0347">Helicase</keyword>
<keyword id="KW-0378">Hydrolase</keyword>
<keyword id="KW-0547">Nucleotide-binding</keyword>
<keyword id="KW-0539">Nucleus</keyword>
<keyword id="KW-1185">Reference proteome</keyword>
<evidence type="ECO:0000250" key="1"/>
<evidence type="ECO:0000250" key="2">
    <source>
        <dbReference type="UniProtKB" id="P97311"/>
    </source>
</evidence>
<evidence type="ECO:0000250" key="3">
    <source>
        <dbReference type="UniProtKB" id="Q14566"/>
    </source>
</evidence>
<evidence type="ECO:0000255" key="4"/>
<evidence type="ECO:0000256" key="5">
    <source>
        <dbReference type="SAM" id="MobiDB-lite"/>
    </source>
</evidence>
<evidence type="ECO:0000305" key="6"/>
<comment type="function">
    <text evidence="3">Acts as a component of the MCM2-7 complex (MCM complex) which is the replicative helicase essential for 'once per cell cycle' DNA replication initiation and elongation in eukaryotic cells. Core component of CDC45-MCM-GINS (CMG) helicase, the molecular machine that unwinds template DNA during replication, and around which the replisome is built. The active ATPase sites in the MCM2-7 ring are formed through the interaction surfaces of two neighboring subunits such that a critical structure of a conserved arginine finger motif is provided in trans relative to the ATP-binding site of the Walker A box of the adjacent subunit. The six ATPase active sites, however, are likely to contribute differentially to the complex helicase activity.</text>
</comment>
<comment type="catalytic activity">
    <reaction evidence="2">
        <text>ATP + H2O = ADP + phosphate + H(+)</text>
        <dbReference type="Rhea" id="RHEA:13065"/>
        <dbReference type="ChEBI" id="CHEBI:15377"/>
        <dbReference type="ChEBI" id="CHEBI:15378"/>
        <dbReference type="ChEBI" id="CHEBI:30616"/>
        <dbReference type="ChEBI" id="CHEBI:43474"/>
        <dbReference type="ChEBI" id="CHEBI:456216"/>
        <dbReference type="EC" id="3.6.4.12"/>
    </reaction>
    <physiologicalReaction direction="left-to-right" evidence="2">
        <dbReference type="Rhea" id="RHEA:13066"/>
    </physiologicalReaction>
</comment>
<comment type="subunit">
    <text>Component of the MCM2-7 complex. The complex forms a toroidal hexameric ring with the proposed subunit order MCM2-MCM6-MCM4-MCM7-MCM3-MCM5 (By simililarity).</text>
</comment>
<comment type="subcellular location">
    <subcellularLocation>
        <location evidence="1">Nucleus</location>
    </subcellularLocation>
</comment>
<comment type="miscellaneous">
    <text evidence="2">Early fractionation of eukaryotic MCM proteins yielded a variety of dimeric, trimeric and tetrameric complexes with unclear biological significance. Specifically a MCM467 subcomplex is shown to have in vitro helicase activity which is inhibited by the MCM2 subunit. The MCM2-7 hexamer is the proposed physiological active complex.</text>
</comment>
<comment type="similarity">
    <text evidence="6">Belongs to the MCM family.</text>
</comment>
<sequence length="867" mass="97772">MIYTDAGVDEDKATIRPNQTHQFQKVQDEAKEWTKNKFLEFLNNFKLKKKIDKNNNNNNNEDNEDNNENENEYDENGIKKEKIDKSYYRQQVERMIKNDKSSLYIDFLHLEKFDKGLGKALLMEYFRLEPAIRQGLSIFIQKYFPSFMERVNKERIVLSICCYNVSTFVHIRELRSSRIGSLCSISGTVTRTSEVRPELVIGSFICKDCNTSSLPIAQQFKYTEPTKCLNPLCSNQRRWKINLEESTFTDWQKVRVQENNSEIPGGSVPRSLEIILRGDSVETARAGDTCTFVGTMNVIPDVSKMSIGNNAQIIKGVASSTKEGSNANGKDDFGGVGGLKDLGVREMNYRVCFFSQSVRSNVSTLSSINRKESGDNHGGHSHSVGIIDEDLEPESKESFLDSLPKKEKDSLKKMIKSKKIYQNLVNSICPSIFGHEEIKRGVLLMLFGGVHKKTPEKIRLRGDINVCIVGDPSTSKSTFLKYLVSFLPRTVYTSGKASSAAGLTATVVKDQESGDFNIEAGALMLADNGICCIDEFDKMEPGDQVAIHEAMEQQTISIAKAGIHASLNARTSILAAANPIGGRYDRNKTLKQNLNIGGPLMSRFDLFFVVLDECNPESDHRIAEHIVLTHQKREKAFNAPFSATEIKNYIKYTKFICPTIPDESVQLLVGHYDRLRQMDTSGSKTPAYRITVRQLESLVRLSESLARLHLDTKVLPKYVNEAARLLEKSIVHVETNDVILGDDDDDLVKNVENDNDNHAEEDGDDGIGKLTMNFSKYSQLSKLLVLQIKQSGKEKSGIKQIDLIDWYIKDQLESGIITDDEVTKETKITKMVINKMINKDNSLVVLVPNQYPDHRILIIHPNYSFDK</sequence>
<protein>
    <recommendedName>
        <fullName>DNA replication licensing factor mcm6</fullName>
        <ecNumber evidence="2">3.6.4.12</ecNumber>
    </recommendedName>
</protein>
<reference key="1">
    <citation type="journal article" date="2002" name="Nature">
        <title>Sequence and analysis of chromosome 2 of Dictyostelium discoideum.</title>
        <authorList>
            <person name="Gloeckner G."/>
            <person name="Eichinger L."/>
            <person name="Szafranski K."/>
            <person name="Pachebat J.A."/>
            <person name="Bankier A.T."/>
            <person name="Dear P.H."/>
            <person name="Lehmann R."/>
            <person name="Baumgart C."/>
            <person name="Parra G."/>
            <person name="Abril J.F."/>
            <person name="Guigo R."/>
            <person name="Kumpf K."/>
            <person name="Tunggal B."/>
            <person name="Cox E.C."/>
            <person name="Quail M.A."/>
            <person name="Platzer M."/>
            <person name="Rosenthal A."/>
            <person name="Noegel A.A."/>
        </authorList>
    </citation>
    <scope>NUCLEOTIDE SEQUENCE [LARGE SCALE GENOMIC DNA]</scope>
    <source>
        <strain>AX4</strain>
    </source>
</reference>
<reference key="2">
    <citation type="journal article" date="2005" name="Nature">
        <title>The genome of the social amoeba Dictyostelium discoideum.</title>
        <authorList>
            <person name="Eichinger L."/>
            <person name="Pachebat J.A."/>
            <person name="Gloeckner G."/>
            <person name="Rajandream M.A."/>
            <person name="Sucgang R."/>
            <person name="Berriman M."/>
            <person name="Song J."/>
            <person name="Olsen R."/>
            <person name="Szafranski K."/>
            <person name="Xu Q."/>
            <person name="Tunggal B."/>
            <person name="Kummerfeld S."/>
            <person name="Madera M."/>
            <person name="Konfortov B.A."/>
            <person name="Rivero F."/>
            <person name="Bankier A.T."/>
            <person name="Lehmann R."/>
            <person name="Hamlin N."/>
            <person name="Davies R."/>
            <person name="Gaudet P."/>
            <person name="Fey P."/>
            <person name="Pilcher K."/>
            <person name="Chen G."/>
            <person name="Saunders D."/>
            <person name="Sodergren E.J."/>
            <person name="Davis P."/>
            <person name="Kerhornou A."/>
            <person name="Nie X."/>
            <person name="Hall N."/>
            <person name="Anjard C."/>
            <person name="Hemphill L."/>
            <person name="Bason N."/>
            <person name="Farbrother P."/>
            <person name="Desany B."/>
            <person name="Just E."/>
            <person name="Morio T."/>
            <person name="Rost R."/>
            <person name="Churcher C.M."/>
            <person name="Cooper J."/>
            <person name="Haydock S."/>
            <person name="van Driessche N."/>
            <person name="Cronin A."/>
            <person name="Goodhead I."/>
            <person name="Muzny D.M."/>
            <person name="Mourier T."/>
            <person name="Pain A."/>
            <person name="Lu M."/>
            <person name="Harper D."/>
            <person name="Lindsay R."/>
            <person name="Hauser H."/>
            <person name="James K.D."/>
            <person name="Quiles M."/>
            <person name="Madan Babu M."/>
            <person name="Saito T."/>
            <person name="Buchrieser C."/>
            <person name="Wardroper A."/>
            <person name="Felder M."/>
            <person name="Thangavelu M."/>
            <person name="Johnson D."/>
            <person name="Knights A."/>
            <person name="Loulseged H."/>
            <person name="Mungall K.L."/>
            <person name="Oliver K."/>
            <person name="Price C."/>
            <person name="Quail M.A."/>
            <person name="Urushihara H."/>
            <person name="Hernandez J."/>
            <person name="Rabbinowitsch E."/>
            <person name="Steffen D."/>
            <person name="Sanders M."/>
            <person name="Ma J."/>
            <person name="Kohara Y."/>
            <person name="Sharp S."/>
            <person name="Simmonds M.N."/>
            <person name="Spiegler S."/>
            <person name="Tivey A."/>
            <person name="Sugano S."/>
            <person name="White B."/>
            <person name="Walker D."/>
            <person name="Woodward J.R."/>
            <person name="Winckler T."/>
            <person name="Tanaka Y."/>
            <person name="Shaulsky G."/>
            <person name="Schleicher M."/>
            <person name="Weinstock G.M."/>
            <person name="Rosenthal A."/>
            <person name="Cox E.C."/>
            <person name="Chisholm R.L."/>
            <person name="Gibbs R.A."/>
            <person name="Loomis W.F."/>
            <person name="Platzer M."/>
            <person name="Kay R.R."/>
            <person name="Williams J.G."/>
            <person name="Dear P.H."/>
            <person name="Noegel A.A."/>
            <person name="Barrell B.G."/>
            <person name="Kuspa A."/>
        </authorList>
    </citation>
    <scope>NUCLEOTIDE SEQUENCE [LARGE SCALE GENOMIC DNA]</scope>
    <source>
        <strain>AX4</strain>
    </source>
</reference>